<evidence type="ECO:0000255" key="1">
    <source>
        <dbReference type="HAMAP-Rule" id="MF_01825"/>
    </source>
</evidence>
<evidence type="ECO:0007829" key="2">
    <source>
        <dbReference type="PDB" id="3OET"/>
    </source>
</evidence>
<sequence>MKILVDENMPYARELFSRLGEVKAVPGRPIPVEELNHADALMVRSVTKVNESLLSGTPINFVGTATAGTDHVDEAWLKQAGIGFSAAPGCNAIAVVEYVFSALLMLAERDGFSLRDRTIGIVGVGNVGSRLQTRLEALGIRTLLCDPPRAARGDEGDFRTLDELVQEADVLTFHTPLYKDGPYKTLHLADETLIRRLKPGAILINACRGPVVDNAALLARLNAGQPLSVVLDVWEGEPDLNVALLEAVDIGTSHIAGYTLEGKARGTTQVFEAYSAFIGREQRVALETLLPAPEFGRITLHGPLDQPTLKRLAHLVYDVRRDDAPLRKVAGIPGEFDKLRKNYLERREWSSLYVMCDDETAAALLCKLGFNAVHHPAH</sequence>
<proteinExistence type="evidence at protein level"/>
<reference key="1">
    <citation type="journal article" date="2001" name="Nature">
        <title>Complete genome sequence of Salmonella enterica serovar Typhimurium LT2.</title>
        <authorList>
            <person name="McClelland M."/>
            <person name="Sanderson K.E."/>
            <person name="Spieth J."/>
            <person name="Clifton S.W."/>
            <person name="Latreille P."/>
            <person name="Courtney L."/>
            <person name="Porwollik S."/>
            <person name="Ali J."/>
            <person name="Dante M."/>
            <person name="Du F."/>
            <person name="Hou S."/>
            <person name="Layman D."/>
            <person name="Leonard S."/>
            <person name="Nguyen C."/>
            <person name="Scott K."/>
            <person name="Holmes A."/>
            <person name="Grewal N."/>
            <person name="Mulvaney E."/>
            <person name="Ryan E."/>
            <person name="Sun H."/>
            <person name="Florea L."/>
            <person name="Miller W."/>
            <person name="Stoneking T."/>
            <person name="Nhan M."/>
            <person name="Waterston R."/>
            <person name="Wilson R.K."/>
        </authorList>
    </citation>
    <scope>NUCLEOTIDE SEQUENCE [LARGE SCALE GENOMIC DNA]</scope>
    <source>
        <strain>LT2 / SGSC1412 / ATCC 700720</strain>
    </source>
</reference>
<dbReference type="EC" id="1.1.1.290" evidence="1"/>
<dbReference type="EMBL" id="AE006468">
    <property type="protein sequence ID" value="AAL21271.1"/>
    <property type="molecule type" value="Genomic_DNA"/>
</dbReference>
<dbReference type="RefSeq" id="NP_461312.1">
    <property type="nucleotide sequence ID" value="NC_003197.2"/>
</dbReference>
<dbReference type="RefSeq" id="WP_000699178.1">
    <property type="nucleotide sequence ID" value="NC_003197.2"/>
</dbReference>
<dbReference type="PDB" id="3OET">
    <property type="method" value="X-ray"/>
    <property type="resolution" value="2.36 A"/>
    <property type="chains" value="A/B/C/D/E/F/G/H=1-378"/>
</dbReference>
<dbReference type="PDBsum" id="3OET"/>
<dbReference type="SMR" id="P60802"/>
<dbReference type="STRING" id="99287.STM2370"/>
<dbReference type="PaxDb" id="99287-STM2370"/>
<dbReference type="GeneID" id="1253892"/>
<dbReference type="KEGG" id="stm:STM2370"/>
<dbReference type="PATRIC" id="fig|99287.12.peg.2509"/>
<dbReference type="HOGENOM" id="CLU_019796_4_0_6"/>
<dbReference type="PhylomeDB" id="P60802"/>
<dbReference type="BioCyc" id="SENT99287:STM2370-MONOMER"/>
<dbReference type="UniPathway" id="UPA00244">
    <property type="reaction ID" value="UER00310"/>
</dbReference>
<dbReference type="EvolutionaryTrace" id="P60802"/>
<dbReference type="Proteomes" id="UP000001014">
    <property type="component" value="Chromosome"/>
</dbReference>
<dbReference type="GO" id="GO:0005829">
    <property type="term" value="C:cytosol"/>
    <property type="evidence" value="ECO:0000318"/>
    <property type="project" value="GO_Central"/>
</dbReference>
<dbReference type="GO" id="GO:0033711">
    <property type="term" value="F:4-phosphoerythronate dehydrogenase activity"/>
    <property type="evidence" value="ECO:0000318"/>
    <property type="project" value="GO_Central"/>
</dbReference>
<dbReference type="GO" id="GO:0051287">
    <property type="term" value="F:NAD binding"/>
    <property type="evidence" value="ECO:0007669"/>
    <property type="project" value="InterPro"/>
</dbReference>
<dbReference type="GO" id="GO:0046983">
    <property type="term" value="F:protein dimerization activity"/>
    <property type="evidence" value="ECO:0007669"/>
    <property type="project" value="InterPro"/>
</dbReference>
<dbReference type="GO" id="GO:0036001">
    <property type="term" value="P:'de novo' pyridoxal 5'-phosphate biosynthetic process"/>
    <property type="evidence" value="ECO:0000318"/>
    <property type="project" value="GO_Central"/>
</dbReference>
<dbReference type="GO" id="GO:0008615">
    <property type="term" value="P:pyridoxine biosynthetic process"/>
    <property type="evidence" value="ECO:0000318"/>
    <property type="project" value="GO_Central"/>
</dbReference>
<dbReference type="CDD" id="cd12158">
    <property type="entry name" value="ErythrP_dh"/>
    <property type="match status" value="1"/>
</dbReference>
<dbReference type="FunFam" id="3.30.1370.170:FF:000001">
    <property type="entry name" value="Erythronate-4-phosphate dehydrogenase"/>
    <property type="match status" value="1"/>
</dbReference>
<dbReference type="FunFam" id="3.40.50.720:FF:000093">
    <property type="entry name" value="Erythronate-4-phosphate dehydrogenase"/>
    <property type="match status" value="1"/>
</dbReference>
<dbReference type="Gene3D" id="3.30.1370.170">
    <property type="match status" value="1"/>
</dbReference>
<dbReference type="Gene3D" id="3.40.50.720">
    <property type="entry name" value="NAD(P)-binding Rossmann-like Domain"/>
    <property type="match status" value="2"/>
</dbReference>
<dbReference type="HAMAP" id="MF_01825">
    <property type="entry name" value="PdxB"/>
    <property type="match status" value="1"/>
</dbReference>
<dbReference type="InterPro" id="IPR006139">
    <property type="entry name" value="D-isomer_2_OHA_DH_cat_dom"/>
</dbReference>
<dbReference type="InterPro" id="IPR029753">
    <property type="entry name" value="D-isomer_DH_CS"/>
</dbReference>
<dbReference type="InterPro" id="IPR029752">
    <property type="entry name" value="D-isomer_DH_CS1"/>
</dbReference>
<dbReference type="InterPro" id="IPR006140">
    <property type="entry name" value="D-isomer_DH_NAD-bd"/>
</dbReference>
<dbReference type="InterPro" id="IPR020921">
    <property type="entry name" value="Erythronate-4-P_DHase"/>
</dbReference>
<dbReference type="InterPro" id="IPR024531">
    <property type="entry name" value="Erythronate-4-P_DHase_dimer"/>
</dbReference>
<dbReference type="InterPro" id="IPR036291">
    <property type="entry name" value="NAD(P)-bd_dom_sf"/>
</dbReference>
<dbReference type="InterPro" id="IPR038251">
    <property type="entry name" value="PdxB_dimer_sf"/>
</dbReference>
<dbReference type="NCBIfam" id="NF001309">
    <property type="entry name" value="PRK00257.1"/>
    <property type="match status" value="1"/>
</dbReference>
<dbReference type="NCBIfam" id="NF011966">
    <property type="entry name" value="PRK15438.1"/>
    <property type="match status" value="1"/>
</dbReference>
<dbReference type="PANTHER" id="PTHR42938">
    <property type="entry name" value="FORMATE DEHYDROGENASE 1"/>
    <property type="match status" value="1"/>
</dbReference>
<dbReference type="PANTHER" id="PTHR42938:SF9">
    <property type="entry name" value="FORMATE DEHYDROGENASE 1"/>
    <property type="match status" value="1"/>
</dbReference>
<dbReference type="Pfam" id="PF00389">
    <property type="entry name" value="2-Hacid_dh"/>
    <property type="match status" value="1"/>
</dbReference>
<dbReference type="Pfam" id="PF02826">
    <property type="entry name" value="2-Hacid_dh_C"/>
    <property type="match status" value="1"/>
</dbReference>
<dbReference type="Pfam" id="PF11890">
    <property type="entry name" value="DUF3410"/>
    <property type="match status" value="1"/>
</dbReference>
<dbReference type="SUPFAM" id="SSF52283">
    <property type="entry name" value="Formate/glycerate dehydrogenase catalytic domain-like"/>
    <property type="match status" value="1"/>
</dbReference>
<dbReference type="SUPFAM" id="SSF51735">
    <property type="entry name" value="NAD(P)-binding Rossmann-fold domains"/>
    <property type="match status" value="1"/>
</dbReference>
<dbReference type="PROSITE" id="PS00065">
    <property type="entry name" value="D_2_HYDROXYACID_DH_1"/>
    <property type="match status" value="1"/>
</dbReference>
<dbReference type="PROSITE" id="PS00671">
    <property type="entry name" value="D_2_HYDROXYACID_DH_3"/>
    <property type="match status" value="1"/>
</dbReference>
<feature type="chain" id="PRO_0000075986" description="Erythronate-4-phosphate dehydrogenase">
    <location>
        <begin position="1"/>
        <end position="378"/>
    </location>
</feature>
<feature type="active site" evidence="1">
    <location>
        <position position="208"/>
    </location>
</feature>
<feature type="active site" evidence="1">
    <location>
        <position position="237"/>
    </location>
</feature>
<feature type="active site" description="Proton donor" evidence="1">
    <location>
        <position position="254"/>
    </location>
</feature>
<feature type="binding site" evidence="1">
    <location>
        <position position="45"/>
    </location>
    <ligand>
        <name>substrate</name>
    </ligand>
</feature>
<feature type="binding site" evidence="1">
    <location>
        <position position="66"/>
    </location>
    <ligand>
        <name>substrate</name>
    </ligand>
</feature>
<feature type="binding site" evidence="1">
    <location>
        <position position="146"/>
    </location>
    <ligand>
        <name>NAD(+)</name>
        <dbReference type="ChEBI" id="CHEBI:57540"/>
    </ligand>
</feature>
<feature type="binding site" evidence="1">
    <location>
        <position position="175"/>
    </location>
    <ligand>
        <name>NAD(+)</name>
        <dbReference type="ChEBI" id="CHEBI:57540"/>
    </ligand>
</feature>
<feature type="binding site" evidence="1">
    <location>
        <position position="232"/>
    </location>
    <ligand>
        <name>NAD(+)</name>
        <dbReference type="ChEBI" id="CHEBI:57540"/>
    </ligand>
</feature>
<feature type="binding site" evidence="1">
    <location>
        <position position="257"/>
    </location>
    <ligand>
        <name>NAD(+)</name>
        <dbReference type="ChEBI" id="CHEBI:57540"/>
    </ligand>
</feature>
<feature type="binding site" evidence="1">
    <location>
        <position position="258"/>
    </location>
    <ligand>
        <name>substrate</name>
    </ligand>
</feature>
<feature type="strand" evidence="2">
    <location>
        <begin position="2"/>
        <end position="6"/>
    </location>
</feature>
<feature type="helix" evidence="2">
    <location>
        <begin position="12"/>
        <end position="16"/>
    </location>
</feature>
<feature type="strand" evidence="2">
    <location>
        <begin position="19"/>
        <end position="25"/>
    </location>
</feature>
<feature type="helix" evidence="2">
    <location>
        <begin position="32"/>
        <end position="35"/>
    </location>
</feature>
<feature type="strand" evidence="2">
    <location>
        <begin position="39"/>
        <end position="43"/>
    </location>
</feature>
<feature type="helix" evidence="2">
    <location>
        <begin position="51"/>
        <end position="54"/>
    </location>
</feature>
<feature type="strand" evidence="2">
    <location>
        <begin position="61"/>
        <end position="67"/>
    </location>
</feature>
<feature type="helix" evidence="2">
    <location>
        <begin position="74"/>
        <end position="79"/>
    </location>
</feature>
<feature type="strand" evidence="2">
    <location>
        <begin position="83"/>
        <end position="85"/>
    </location>
</feature>
<feature type="turn" evidence="2">
    <location>
        <begin position="88"/>
        <end position="91"/>
    </location>
</feature>
<feature type="helix" evidence="2">
    <location>
        <begin position="92"/>
        <end position="109"/>
    </location>
</feature>
<feature type="helix" evidence="2">
    <location>
        <begin position="114"/>
        <end position="116"/>
    </location>
</feature>
<feature type="strand" evidence="2">
    <location>
        <begin position="118"/>
        <end position="122"/>
    </location>
</feature>
<feature type="helix" evidence="2">
    <location>
        <begin position="126"/>
        <end position="137"/>
    </location>
</feature>
<feature type="strand" evidence="2">
    <location>
        <begin position="141"/>
        <end position="145"/>
    </location>
</feature>
<feature type="helix" evidence="2">
    <location>
        <begin position="147"/>
        <end position="151"/>
    </location>
</feature>
<feature type="helix" evidence="2">
    <location>
        <begin position="161"/>
        <end position="167"/>
    </location>
</feature>
<feature type="strand" evidence="2">
    <location>
        <begin position="169"/>
        <end position="173"/>
    </location>
</feature>
<feature type="helix" evidence="2">
    <location>
        <begin position="191"/>
        <end position="196"/>
    </location>
</feature>
<feature type="strand" evidence="2">
    <location>
        <begin position="201"/>
        <end position="205"/>
    </location>
</feature>
<feature type="helix" evidence="2">
    <location>
        <begin position="209"/>
        <end position="211"/>
    </location>
</feature>
<feature type="helix" evidence="2">
    <location>
        <begin position="214"/>
        <end position="222"/>
    </location>
</feature>
<feature type="strand" evidence="2">
    <location>
        <begin position="227"/>
        <end position="232"/>
    </location>
</feature>
<feature type="turn" evidence="2">
    <location>
        <begin position="235"/>
        <end position="238"/>
    </location>
</feature>
<feature type="helix" evidence="2">
    <location>
        <begin position="242"/>
        <end position="247"/>
    </location>
</feature>
<feature type="strand" evidence="2">
    <location>
        <begin position="248"/>
        <end position="251"/>
    </location>
</feature>
<feature type="helix" evidence="2">
    <location>
        <begin position="260"/>
        <end position="277"/>
    </location>
</feature>
<feature type="helix" evidence="2">
    <location>
        <begin position="286"/>
        <end position="289"/>
    </location>
</feature>
<feature type="strand" evidence="2">
    <location>
        <begin position="297"/>
        <end position="300"/>
    </location>
</feature>
<feature type="helix" evidence="2">
    <location>
        <begin position="306"/>
        <end position="316"/>
    </location>
</feature>
<feature type="helix" evidence="2">
    <location>
        <begin position="320"/>
        <end position="329"/>
    </location>
</feature>
<feature type="helix" evidence="2">
    <location>
        <begin position="335"/>
        <end position="341"/>
    </location>
</feature>
<feature type="helix" evidence="2">
    <location>
        <begin position="349"/>
        <end position="351"/>
    </location>
</feature>
<feature type="strand" evidence="2">
    <location>
        <begin position="352"/>
        <end position="358"/>
    </location>
</feature>
<feature type="helix" evidence="2">
    <location>
        <begin position="359"/>
        <end position="368"/>
    </location>
</feature>
<feature type="strand" evidence="2">
    <location>
        <begin position="371"/>
        <end position="374"/>
    </location>
</feature>
<comment type="function">
    <text evidence="1">Catalyzes the oxidation of erythronate-4-phosphate to 3-hydroxy-2-oxo-4-phosphonooxybutanoate.</text>
</comment>
<comment type="catalytic activity">
    <reaction evidence="1">
        <text>4-phospho-D-erythronate + NAD(+) = (R)-3-hydroxy-2-oxo-4-phosphooxybutanoate + NADH + H(+)</text>
        <dbReference type="Rhea" id="RHEA:18829"/>
        <dbReference type="ChEBI" id="CHEBI:15378"/>
        <dbReference type="ChEBI" id="CHEBI:57540"/>
        <dbReference type="ChEBI" id="CHEBI:57945"/>
        <dbReference type="ChEBI" id="CHEBI:58538"/>
        <dbReference type="ChEBI" id="CHEBI:58766"/>
        <dbReference type="EC" id="1.1.1.290"/>
    </reaction>
</comment>
<comment type="pathway">
    <text evidence="1">Cofactor biosynthesis; pyridoxine 5'-phosphate biosynthesis; pyridoxine 5'-phosphate from D-erythrose 4-phosphate: step 2/5.</text>
</comment>
<comment type="subunit">
    <text evidence="1">Homodimer.</text>
</comment>
<comment type="subcellular location">
    <subcellularLocation>
        <location evidence="1">Cytoplasm</location>
    </subcellularLocation>
</comment>
<comment type="similarity">
    <text evidence="1">Belongs to the D-isomer specific 2-hydroxyacid dehydrogenase family. PdxB subfamily.</text>
</comment>
<accession>P60802</accession>
<accession>Q8XGK3</accession>
<gene>
    <name evidence="1" type="primary">pdxB</name>
    <name type="ordered locus">STM2370</name>
</gene>
<organism>
    <name type="scientific">Salmonella typhimurium (strain LT2 / SGSC1412 / ATCC 700720)</name>
    <dbReference type="NCBI Taxonomy" id="99287"/>
    <lineage>
        <taxon>Bacteria</taxon>
        <taxon>Pseudomonadati</taxon>
        <taxon>Pseudomonadota</taxon>
        <taxon>Gammaproteobacteria</taxon>
        <taxon>Enterobacterales</taxon>
        <taxon>Enterobacteriaceae</taxon>
        <taxon>Salmonella</taxon>
    </lineage>
</organism>
<protein>
    <recommendedName>
        <fullName evidence="1">Erythronate-4-phosphate dehydrogenase</fullName>
        <ecNumber evidence="1">1.1.1.290</ecNumber>
    </recommendedName>
</protein>
<keyword id="KW-0002">3D-structure</keyword>
<keyword id="KW-0963">Cytoplasm</keyword>
<keyword id="KW-0520">NAD</keyword>
<keyword id="KW-0560">Oxidoreductase</keyword>
<keyword id="KW-0664">Pyridoxine biosynthesis</keyword>
<keyword id="KW-1185">Reference proteome</keyword>
<name>PDXB_SALTY</name>